<organism>
    <name type="scientific">Salmonella paratyphi A (strain ATCC 9150 / SARB42)</name>
    <dbReference type="NCBI Taxonomy" id="295319"/>
    <lineage>
        <taxon>Bacteria</taxon>
        <taxon>Pseudomonadati</taxon>
        <taxon>Pseudomonadota</taxon>
        <taxon>Gammaproteobacteria</taxon>
        <taxon>Enterobacterales</taxon>
        <taxon>Enterobacteriaceae</taxon>
        <taxon>Salmonella</taxon>
    </lineage>
</organism>
<dbReference type="EC" id="1.3.5.2" evidence="1"/>
<dbReference type="EMBL" id="CP000026">
    <property type="protein sequence ID" value="AAV77708.1"/>
    <property type="molecule type" value="Genomic_DNA"/>
</dbReference>
<dbReference type="RefSeq" id="WP_000291723.1">
    <property type="nucleotide sequence ID" value="NC_006511.1"/>
</dbReference>
<dbReference type="SMR" id="Q5PGE0"/>
<dbReference type="KEGG" id="spt:SPA1792"/>
<dbReference type="HOGENOM" id="CLU_013640_2_0_6"/>
<dbReference type="UniPathway" id="UPA00070">
    <property type="reaction ID" value="UER00946"/>
</dbReference>
<dbReference type="Proteomes" id="UP000008185">
    <property type="component" value="Chromosome"/>
</dbReference>
<dbReference type="GO" id="GO:0005737">
    <property type="term" value="C:cytoplasm"/>
    <property type="evidence" value="ECO:0007669"/>
    <property type="project" value="InterPro"/>
</dbReference>
<dbReference type="GO" id="GO:0005886">
    <property type="term" value="C:plasma membrane"/>
    <property type="evidence" value="ECO:0007669"/>
    <property type="project" value="UniProtKB-SubCell"/>
</dbReference>
<dbReference type="GO" id="GO:0106430">
    <property type="term" value="F:dihydroorotate dehydrogenase (quinone) activity"/>
    <property type="evidence" value="ECO:0007669"/>
    <property type="project" value="UniProtKB-EC"/>
</dbReference>
<dbReference type="GO" id="GO:0006207">
    <property type="term" value="P:'de novo' pyrimidine nucleobase biosynthetic process"/>
    <property type="evidence" value="ECO:0007669"/>
    <property type="project" value="InterPro"/>
</dbReference>
<dbReference type="GO" id="GO:0044205">
    <property type="term" value="P:'de novo' UMP biosynthetic process"/>
    <property type="evidence" value="ECO:0007669"/>
    <property type="project" value="UniProtKB-UniRule"/>
</dbReference>
<dbReference type="CDD" id="cd04738">
    <property type="entry name" value="DHOD_2_like"/>
    <property type="match status" value="1"/>
</dbReference>
<dbReference type="FunFam" id="3.20.20.70:FF:000028">
    <property type="entry name" value="Dihydroorotate dehydrogenase (quinone)"/>
    <property type="match status" value="1"/>
</dbReference>
<dbReference type="Gene3D" id="3.20.20.70">
    <property type="entry name" value="Aldolase class I"/>
    <property type="match status" value="1"/>
</dbReference>
<dbReference type="HAMAP" id="MF_00225">
    <property type="entry name" value="DHO_dh_type2"/>
    <property type="match status" value="1"/>
</dbReference>
<dbReference type="InterPro" id="IPR013785">
    <property type="entry name" value="Aldolase_TIM"/>
</dbReference>
<dbReference type="InterPro" id="IPR050074">
    <property type="entry name" value="DHO_dehydrogenase"/>
</dbReference>
<dbReference type="InterPro" id="IPR012135">
    <property type="entry name" value="Dihydroorotate_DH_1_2"/>
</dbReference>
<dbReference type="InterPro" id="IPR005719">
    <property type="entry name" value="Dihydroorotate_DH_2"/>
</dbReference>
<dbReference type="InterPro" id="IPR005720">
    <property type="entry name" value="Dihydroorotate_DH_cat"/>
</dbReference>
<dbReference type="InterPro" id="IPR001295">
    <property type="entry name" value="Dihydroorotate_DH_CS"/>
</dbReference>
<dbReference type="NCBIfam" id="NF003644">
    <property type="entry name" value="PRK05286.1-1"/>
    <property type="match status" value="1"/>
</dbReference>
<dbReference type="NCBIfam" id="NF003645">
    <property type="entry name" value="PRK05286.1-2"/>
    <property type="match status" value="1"/>
</dbReference>
<dbReference type="NCBIfam" id="NF003646">
    <property type="entry name" value="PRK05286.1-4"/>
    <property type="match status" value="1"/>
</dbReference>
<dbReference type="NCBIfam" id="NF003652">
    <property type="entry name" value="PRK05286.2-5"/>
    <property type="match status" value="1"/>
</dbReference>
<dbReference type="NCBIfam" id="TIGR01036">
    <property type="entry name" value="pyrD_sub2"/>
    <property type="match status" value="1"/>
</dbReference>
<dbReference type="PANTHER" id="PTHR48109:SF4">
    <property type="entry name" value="DIHYDROOROTATE DEHYDROGENASE (QUINONE), MITOCHONDRIAL"/>
    <property type="match status" value="1"/>
</dbReference>
<dbReference type="PANTHER" id="PTHR48109">
    <property type="entry name" value="DIHYDROOROTATE DEHYDROGENASE (QUINONE), MITOCHONDRIAL-RELATED"/>
    <property type="match status" value="1"/>
</dbReference>
<dbReference type="Pfam" id="PF01180">
    <property type="entry name" value="DHO_dh"/>
    <property type="match status" value="1"/>
</dbReference>
<dbReference type="PIRSF" id="PIRSF000164">
    <property type="entry name" value="DHO_oxidase"/>
    <property type="match status" value="1"/>
</dbReference>
<dbReference type="SUPFAM" id="SSF51395">
    <property type="entry name" value="FMN-linked oxidoreductases"/>
    <property type="match status" value="1"/>
</dbReference>
<dbReference type="PROSITE" id="PS00911">
    <property type="entry name" value="DHODEHASE_1"/>
    <property type="match status" value="1"/>
</dbReference>
<dbReference type="PROSITE" id="PS00912">
    <property type="entry name" value="DHODEHASE_2"/>
    <property type="match status" value="1"/>
</dbReference>
<feature type="chain" id="PRO_0000148472" description="Dihydroorotate dehydrogenase (quinone)">
    <location>
        <begin position="1"/>
        <end position="336"/>
    </location>
</feature>
<feature type="active site" description="Nucleophile" evidence="1">
    <location>
        <position position="175"/>
    </location>
</feature>
<feature type="binding site" evidence="1">
    <location>
        <begin position="62"/>
        <end position="66"/>
    </location>
    <ligand>
        <name>FMN</name>
        <dbReference type="ChEBI" id="CHEBI:58210"/>
    </ligand>
</feature>
<feature type="binding site" evidence="1">
    <location>
        <position position="66"/>
    </location>
    <ligand>
        <name>substrate</name>
    </ligand>
</feature>
<feature type="binding site" evidence="1">
    <location>
        <position position="86"/>
    </location>
    <ligand>
        <name>FMN</name>
        <dbReference type="ChEBI" id="CHEBI:58210"/>
    </ligand>
</feature>
<feature type="binding site" evidence="1">
    <location>
        <begin position="111"/>
        <end position="115"/>
    </location>
    <ligand>
        <name>substrate</name>
    </ligand>
</feature>
<feature type="binding site" evidence="1">
    <location>
        <position position="139"/>
    </location>
    <ligand>
        <name>FMN</name>
        <dbReference type="ChEBI" id="CHEBI:58210"/>
    </ligand>
</feature>
<feature type="binding site" evidence="1">
    <location>
        <position position="172"/>
    </location>
    <ligand>
        <name>FMN</name>
        <dbReference type="ChEBI" id="CHEBI:58210"/>
    </ligand>
</feature>
<feature type="binding site" evidence="1">
    <location>
        <position position="172"/>
    </location>
    <ligand>
        <name>substrate</name>
    </ligand>
</feature>
<feature type="binding site" evidence="1">
    <location>
        <position position="177"/>
    </location>
    <ligand>
        <name>substrate</name>
    </ligand>
</feature>
<feature type="binding site" evidence="1">
    <location>
        <position position="217"/>
    </location>
    <ligand>
        <name>FMN</name>
        <dbReference type="ChEBI" id="CHEBI:58210"/>
    </ligand>
</feature>
<feature type="binding site" evidence="1">
    <location>
        <position position="245"/>
    </location>
    <ligand>
        <name>FMN</name>
        <dbReference type="ChEBI" id="CHEBI:58210"/>
    </ligand>
</feature>
<feature type="binding site" evidence="1">
    <location>
        <begin position="246"/>
        <end position="247"/>
    </location>
    <ligand>
        <name>substrate</name>
    </ligand>
</feature>
<feature type="binding site" evidence="1">
    <location>
        <position position="268"/>
    </location>
    <ligand>
        <name>FMN</name>
        <dbReference type="ChEBI" id="CHEBI:58210"/>
    </ligand>
</feature>
<feature type="binding site" evidence="1">
    <location>
        <position position="297"/>
    </location>
    <ligand>
        <name>FMN</name>
        <dbReference type="ChEBI" id="CHEBI:58210"/>
    </ligand>
</feature>
<feature type="binding site" evidence="1">
    <location>
        <begin position="318"/>
        <end position="319"/>
    </location>
    <ligand>
        <name>FMN</name>
        <dbReference type="ChEBI" id="CHEBI:58210"/>
    </ligand>
</feature>
<name>PYRD_SALPA</name>
<protein>
    <recommendedName>
        <fullName evidence="1">Dihydroorotate dehydrogenase (quinone)</fullName>
        <ecNumber evidence="1">1.3.5.2</ecNumber>
    </recommendedName>
    <alternativeName>
        <fullName evidence="1">DHOdehase</fullName>
        <shortName evidence="1">DHOD</shortName>
        <shortName evidence="1">DHODase</shortName>
    </alternativeName>
    <alternativeName>
        <fullName evidence="1">Dihydroorotate oxidase</fullName>
    </alternativeName>
</protein>
<proteinExistence type="inferred from homology"/>
<sequence length="336" mass="36740">MYYPFVRKALFQLDPERAHEFTFQQLRRITGTPLEALVRQKVPTKPVTCMGLTFKNPLGLAAGLDKDGECIDALGAMGFGSLEIGTVTPRPQPGNDKPRLFRLVDAEGLINRMGFNNLGVDNLVENVKKAHFDGILGINIGKNKDTPVENGKDDYLICMEKVYAYAGYIAINISSPNTPGLRTLQYGDALDDLLTAIKNKQNDLQAIHHKYVPVAVKIAPDLCEEELIQVADSLLRHNIDGVIATNTTLDRSLVQGMKNCQQTGGLSGRPLQLKSTEIIRRLSQELKGQLPIIGVGGIDSVIAAREKIAAGATLVQIYSGFIFKGPPLIKEIVTHI</sequence>
<keyword id="KW-1003">Cell membrane</keyword>
<keyword id="KW-0285">Flavoprotein</keyword>
<keyword id="KW-0288">FMN</keyword>
<keyword id="KW-0472">Membrane</keyword>
<keyword id="KW-0560">Oxidoreductase</keyword>
<keyword id="KW-0665">Pyrimidine biosynthesis</keyword>
<reference key="1">
    <citation type="journal article" date="2004" name="Nat. Genet.">
        <title>Comparison of genome degradation in Paratyphi A and Typhi, human-restricted serovars of Salmonella enterica that cause typhoid.</title>
        <authorList>
            <person name="McClelland M."/>
            <person name="Sanderson K.E."/>
            <person name="Clifton S.W."/>
            <person name="Latreille P."/>
            <person name="Porwollik S."/>
            <person name="Sabo A."/>
            <person name="Meyer R."/>
            <person name="Bieri T."/>
            <person name="Ozersky P."/>
            <person name="McLellan M."/>
            <person name="Harkins C.R."/>
            <person name="Wang C."/>
            <person name="Nguyen C."/>
            <person name="Berghoff A."/>
            <person name="Elliott G."/>
            <person name="Kohlberg S."/>
            <person name="Strong C."/>
            <person name="Du F."/>
            <person name="Carter J."/>
            <person name="Kremizki C."/>
            <person name="Layman D."/>
            <person name="Leonard S."/>
            <person name="Sun H."/>
            <person name="Fulton L."/>
            <person name="Nash W."/>
            <person name="Miner T."/>
            <person name="Minx P."/>
            <person name="Delehaunty K."/>
            <person name="Fronick C."/>
            <person name="Magrini V."/>
            <person name="Nhan M."/>
            <person name="Warren W."/>
            <person name="Florea L."/>
            <person name="Spieth J."/>
            <person name="Wilson R.K."/>
        </authorList>
    </citation>
    <scope>NUCLEOTIDE SEQUENCE [LARGE SCALE GENOMIC DNA]</scope>
    <source>
        <strain>ATCC 9150 / SARB42</strain>
    </source>
</reference>
<evidence type="ECO:0000255" key="1">
    <source>
        <dbReference type="HAMAP-Rule" id="MF_00225"/>
    </source>
</evidence>
<gene>
    <name evidence="1" type="primary">pyrD</name>
    <name type="ordered locus">SPA1792</name>
</gene>
<comment type="function">
    <text evidence="1">Catalyzes the conversion of dihydroorotate to orotate with quinone as electron acceptor.</text>
</comment>
<comment type="catalytic activity">
    <reaction evidence="1">
        <text>(S)-dihydroorotate + a quinone = orotate + a quinol</text>
        <dbReference type="Rhea" id="RHEA:30187"/>
        <dbReference type="ChEBI" id="CHEBI:24646"/>
        <dbReference type="ChEBI" id="CHEBI:30839"/>
        <dbReference type="ChEBI" id="CHEBI:30864"/>
        <dbReference type="ChEBI" id="CHEBI:132124"/>
        <dbReference type="EC" id="1.3.5.2"/>
    </reaction>
</comment>
<comment type="cofactor">
    <cofactor evidence="1">
        <name>FMN</name>
        <dbReference type="ChEBI" id="CHEBI:58210"/>
    </cofactor>
    <text evidence="1">Binds 1 FMN per subunit.</text>
</comment>
<comment type="pathway">
    <text evidence="1">Pyrimidine metabolism; UMP biosynthesis via de novo pathway; orotate from (S)-dihydroorotate (quinone route): step 1/1.</text>
</comment>
<comment type="subunit">
    <text evidence="1">Monomer.</text>
</comment>
<comment type="subcellular location">
    <subcellularLocation>
        <location evidence="1">Cell membrane</location>
        <topology evidence="1">Peripheral membrane protein</topology>
    </subcellularLocation>
</comment>
<comment type="similarity">
    <text evidence="1">Belongs to the dihydroorotate dehydrogenase family. Type 2 subfamily.</text>
</comment>
<accession>Q5PGE0</accession>